<comment type="function">
    <text evidence="1">Binds 16S rRNA, required for the assembly of 30S particles.</text>
</comment>
<comment type="subunit">
    <text evidence="1">Part of the 30S ribosomal subunit.</text>
</comment>
<comment type="subcellular location">
    <subcellularLocation>
        <location>Plastid</location>
    </subcellularLocation>
</comment>
<comment type="similarity">
    <text evidence="1">Belongs to the universal ribosomal protein uS14 family.</text>
</comment>
<evidence type="ECO:0000255" key="1">
    <source>
        <dbReference type="HAMAP-Rule" id="MF_00537"/>
    </source>
</evidence>
<evidence type="ECO:0000305" key="2"/>
<proteinExistence type="inferred from homology"/>
<gene>
    <name evidence="1" type="primary">rps14</name>
</gene>
<geneLocation type="non-photosynthetic plastid"/>
<sequence length="101" mass="11747">MAKKSLIVREYKKNILVNKYYKKRLLLKSQLNNTINSTDCILKILNKLQKLPKKSSPTKLRNRCTLTGRARGVYSEYKISRFVFRNLALNGLLPGVFKASW</sequence>
<keyword id="KW-0934">Plastid</keyword>
<keyword id="KW-0687">Ribonucleoprotein</keyword>
<keyword id="KW-0689">Ribosomal protein</keyword>
<keyword id="KW-0694">RNA-binding</keyword>
<keyword id="KW-0699">rRNA-binding</keyword>
<feature type="chain" id="PRO_0000293972" description="Small ribosomal subunit protein uS14c">
    <location>
        <begin position="1"/>
        <end position="101"/>
    </location>
</feature>
<name>RR14_HELSJ</name>
<organism>
    <name type="scientific">Helicosporidium sp. subsp. Simulium jonesii</name>
    <name type="common">Green alga</name>
    <dbReference type="NCBI Taxonomy" id="145475"/>
    <lineage>
        <taxon>Eukaryota</taxon>
        <taxon>Viridiplantae</taxon>
        <taxon>Chlorophyta</taxon>
        <taxon>core chlorophytes</taxon>
        <taxon>Trebouxiophyceae</taxon>
        <taxon>Chlorellales</taxon>
        <taxon>Chlorellaceae</taxon>
        <taxon>Helicosporidium</taxon>
    </lineage>
</organism>
<protein>
    <recommendedName>
        <fullName evidence="2">Small ribosomal subunit protein uS14c</fullName>
    </recommendedName>
    <alternativeName>
        <fullName>Plastid 30S ribosomal protein S14</fullName>
    </alternativeName>
</protein>
<accession>Q2EEX3</accession>
<dbReference type="EMBL" id="DQ398104">
    <property type="protein sequence ID" value="ABD33969.1"/>
    <property type="molecule type" value="Genomic_DNA"/>
</dbReference>
<dbReference type="RefSeq" id="YP_635921.1">
    <property type="nucleotide sequence ID" value="NC_008100.1"/>
</dbReference>
<dbReference type="SMR" id="Q2EEX3"/>
<dbReference type="GeneID" id="4100440"/>
<dbReference type="GO" id="GO:0009536">
    <property type="term" value="C:plastid"/>
    <property type="evidence" value="ECO:0007669"/>
    <property type="project" value="UniProtKB-SubCell"/>
</dbReference>
<dbReference type="GO" id="GO:0015935">
    <property type="term" value="C:small ribosomal subunit"/>
    <property type="evidence" value="ECO:0007669"/>
    <property type="project" value="TreeGrafter"/>
</dbReference>
<dbReference type="GO" id="GO:0019843">
    <property type="term" value="F:rRNA binding"/>
    <property type="evidence" value="ECO:0007669"/>
    <property type="project" value="UniProtKB-KW"/>
</dbReference>
<dbReference type="GO" id="GO:0003735">
    <property type="term" value="F:structural constituent of ribosome"/>
    <property type="evidence" value="ECO:0007669"/>
    <property type="project" value="InterPro"/>
</dbReference>
<dbReference type="GO" id="GO:0006412">
    <property type="term" value="P:translation"/>
    <property type="evidence" value="ECO:0007669"/>
    <property type="project" value="InterPro"/>
</dbReference>
<dbReference type="FunFam" id="1.10.287.1480:FF:000001">
    <property type="entry name" value="30S ribosomal protein S14"/>
    <property type="match status" value="1"/>
</dbReference>
<dbReference type="Gene3D" id="1.10.287.1480">
    <property type="match status" value="1"/>
</dbReference>
<dbReference type="HAMAP" id="MF_00537">
    <property type="entry name" value="Ribosomal_uS14_1"/>
    <property type="match status" value="1"/>
</dbReference>
<dbReference type="InterPro" id="IPR001209">
    <property type="entry name" value="Ribosomal_uS14"/>
</dbReference>
<dbReference type="InterPro" id="IPR023036">
    <property type="entry name" value="Ribosomal_uS14_bac/plastid"/>
</dbReference>
<dbReference type="NCBIfam" id="NF006477">
    <property type="entry name" value="PRK08881.1"/>
    <property type="match status" value="1"/>
</dbReference>
<dbReference type="PANTHER" id="PTHR19836">
    <property type="entry name" value="30S RIBOSOMAL PROTEIN S14"/>
    <property type="match status" value="1"/>
</dbReference>
<dbReference type="PANTHER" id="PTHR19836:SF19">
    <property type="entry name" value="SMALL RIBOSOMAL SUBUNIT PROTEIN US14M"/>
    <property type="match status" value="1"/>
</dbReference>
<dbReference type="Pfam" id="PF00253">
    <property type="entry name" value="Ribosomal_S14"/>
    <property type="match status" value="1"/>
</dbReference>
<dbReference type="SUPFAM" id="SSF57716">
    <property type="entry name" value="Glucocorticoid receptor-like (DNA-binding domain)"/>
    <property type="match status" value="1"/>
</dbReference>
<reference key="1">
    <citation type="journal article" date="2006" name="BMC Biol.">
        <title>The complete plastid genome sequence of the parasitic green alga, Helicosporidium sp. is highly reduced and structured.</title>
        <authorList>
            <person name="de Koning A.P."/>
            <person name="Keeling P.J."/>
        </authorList>
    </citation>
    <scope>NUCLEOTIDE SEQUENCE [LARGE SCALE GENOMIC DNA]</scope>
</reference>